<comment type="function">
    <text>Catalyzes the decarboxylation of oxaloacetate coupled to Na(+) translocation.</text>
</comment>
<comment type="catalytic activity">
    <reaction>
        <text>oxaloacetate + 2 Na(+)(in) + H(+) = pyruvate + 2 Na(+)(out) + CO2</text>
        <dbReference type="Rhea" id="RHEA:57724"/>
        <dbReference type="ChEBI" id="CHEBI:15361"/>
        <dbReference type="ChEBI" id="CHEBI:15378"/>
        <dbReference type="ChEBI" id="CHEBI:16452"/>
        <dbReference type="ChEBI" id="CHEBI:16526"/>
        <dbReference type="ChEBI" id="CHEBI:29101"/>
        <dbReference type="EC" id="7.2.4.2"/>
    </reaction>
</comment>
<comment type="cofactor">
    <cofactor>
        <name>Na(+)</name>
        <dbReference type="ChEBI" id="CHEBI:29101"/>
    </cofactor>
</comment>
<comment type="subunit">
    <text>Heterotrimer of an alpha, a beta and a gamma subunit.</text>
</comment>
<comment type="subcellular location">
    <subcellularLocation>
        <location>Cell membrane</location>
        <topology>Multi-pass membrane protein</topology>
    </subcellularLocation>
</comment>
<comment type="similarity">
    <text evidence="2">Belongs to the GcdB/MmdB/OadB family.</text>
</comment>
<organism>
    <name type="scientific">Salmonella typhi</name>
    <dbReference type="NCBI Taxonomy" id="90370"/>
    <lineage>
        <taxon>Bacteria</taxon>
        <taxon>Pseudomonadati</taxon>
        <taxon>Pseudomonadota</taxon>
        <taxon>Gammaproteobacteria</taxon>
        <taxon>Enterobacterales</taxon>
        <taxon>Enterobacteriaceae</taxon>
        <taxon>Salmonella</taxon>
    </lineage>
</organism>
<protein>
    <recommendedName>
        <fullName>Oxaloacetate decarboxylase beta chain 2</fullName>
        <ecNumber>7.2.4.2</ecNumber>
    </recommendedName>
</protein>
<accession>Q8Z3E5</accession>
<accession>Q83SW0</accession>
<dbReference type="EC" id="7.2.4.2"/>
<dbReference type="EMBL" id="AL513382">
    <property type="protein sequence ID" value="CAD07866.1"/>
    <property type="molecule type" value="Genomic_DNA"/>
</dbReference>
<dbReference type="EMBL" id="AE014613">
    <property type="protein sequence ID" value="AAO70801.1"/>
    <property type="molecule type" value="Genomic_DNA"/>
</dbReference>
<dbReference type="RefSeq" id="NP_457727.1">
    <property type="nucleotide sequence ID" value="NC_003198.1"/>
</dbReference>
<dbReference type="RefSeq" id="WP_000444843.1">
    <property type="nucleotide sequence ID" value="NZ_QGFE01000135.1"/>
</dbReference>
<dbReference type="SMR" id="Q8Z3E5"/>
<dbReference type="STRING" id="220341.gene:17587379"/>
<dbReference type="KEGG" id="stt:t3266"/>
<dbReference type="KEGG" id="sty:STY3531"/>
<dbReference type="PATRIC" id="fig|220341.7.peg.3595"/>
<dbReference type="eggNOG" id="COG1883">
    <property type="taxonomic scope" value="Bacteria"/>
</dbReference>
<dbReference type="HOGENOM" id="CLU_036168_0_0_6"/>
<dbReference type="OMA" id="MNFIYYM"/>
<dbReference type="Proteomes" id="UP000000541">
    <property type="component" value="Chromosome"/>
</dbReference>
<dbReference type="Proteomes" id="UP000002670">
    <property type="component" value="Chromosome"/>
</dbReference>
<dbReference type="GO" id="GO:0005886">
    <property type="term" value="C:plasma membrane"/>
    <property type="evidence" value="ECO:0007669"/>
    <property type="project" value="UniProtKB-SubCell"/>
</dbReference>
<dbReference type="GO" id="GO:0015451">
    <property type="term" value="F:decarboxylation-driven active transmembrane transporter activity"/>
    <property type="evidence" value="ECO:0007669"/>
    <property type="project" value="UniProtKB-EC"/>
</dbReference>
<dbReference type="GO" id="GO:0016829">
    <property type="term" value="F:lyase activity"/>
    <property type="evidence" value="ECO:0007669"/>
    <property type="project" value="InterPro"/>
</dbReference>
<dbReference type="GO" id="GO:0006814">
    <property type="term" value="P:sodium ion transport"/>
    <property type="evidence" value="ECO:0007669"/>
    <property type="project" value="UniProtKB-KW"/>
</dbReference>
<dbReference type="InterPro" id="IPR005661">
    <property type="entry name" value="OadB_MmdB"/>
</dbReference>
<dbReference type="NCBIfam" id="TIGR01109">
    <property type="entry name" value="Na_pump_decarbB"/>
    <property type="match status" value="1"/>
</dbReference>
<dbReference type="NCBIfam" id="NF012019">
    <property type="entry name" value="PRK15475.1"/>
    <property type="match status" value="1"/>
</dbReference>
<dbReference type="NCBIfam" id="NF012020">
    <property type="entry name" value="PRK15476.1"/>
    <property type="match status" value="1"/>
</dbReference>
<dbReference type="NCBIfam" id="NF012021">
    <property type="entry name" value="PRK15477.1"/>
    <property type="match status" value="1"/>
</dbReference>
<dbReference type="PANTHER" id="PTHR35806">
    <property type="entry name" value="OXALOACETATE DECARBOXYLASE BETA CHAIN 2"/>
    <property type="match status" value="1"/>
</dbReference>
<dbReference type="PANTHER" id="PTHR35806:SF1">
    <property type="entry name" value="OXALOACETATE DECARBOXYLASE BETA CHAIN 2"/>
    <property type="match status" value="1"/>
</dbReference>
<dbReference type="Pfam" id="PF03977">
    <property type="entry name" value="OAD_beta"/>
    <property type="match status" value="1"/>
</dbReference>
<dbReference type="PIRSF" id="PIRSF015658">
    <property type="entry name" value="MmdB_OadB"/>
    <property type="match status" value="1"/>
</dbReference>
<feature type="chain" id="PRO_0000232700" description="Oxaloacetate decarboxylase beta chain 2">
    <location>
        <begin position="1"/>
        <end position="433"/>
    </location>
</feature>
<feature type="transmembrane region" description="Helical" evidence="1">
    <location>
        <begin position="16"/>
        <end position="36"/>
    </location>
</feature>
<feature type="transmembrane region" description="Helical" evidence="1">
    <location>
        <begin position="42"/>
        <end position="62"/>
    </location>
</feature>
<feature type="transmembrane region" description="Helical" evidence="1">
    <location>
        <begin position="122"/>
        <end position="142"/>
    </location>
</feature>
<feature type="transmembrane region" description="Helical" evidence="1">
    <location>
        <begin position="168"/>
        <end position="188"/>
    </location>
</feature>
<feature type="transmembrane region" description="Helical" evidence="1">
    <location>
        <begin position="190"/>
        <end position="210"/>
    </location>
</feature>
<feature type="transmembrane region" description="Helical" evidence="1">
    <location>
        <begin position="216"/>
        <end position="236"/>
    </location>
</feature>
<feature type="transmembrane region" description="Helical" evidence="1">
    <location>
        <begin position="266"/>
        <end position="286"/>
    </location>
</feature>
<feature type="transmembrane region" description="Helical" evidence="1">
    <location>
        <begin position="311"/>
        <end position="331"/>
    </location>
</feature>
<feature type="transmembrane region" description="Helical" evidence="1">
    <location>
        <begin position="340"/>
        <end position="360"/>
    </location>
</feature>
<feature type="transmembrane region" description="Helical" evidence="1">
    <location>
        <begin position="413"/>
        <end position="433"/>
    </location>
</feature>
<feature type="sequence conflict" description="In Ref. 2; AAO70801." evidence="2" ref="2">
    <original>T</original>
    <variation>M</variation>
    <location>
        <position position="339"/>
    </location>
</feature>
<keyword id="KW-1003">Cell membrane</keyword>
<keyword id="KW-0406">Ion transport</keyword>
<keyword id="KW-0472">Membrane</keyword>
<keyword id="KW-0915">Sodium</keyword>
<keyword id="KW-0739">Sodium transport</keyword>
<keyword id="KW-1278">Translocase</keyword>
<keyword id="KW-0812">Transmembrane</keyword>
<keyword id="KW-1133">Transmembrane helix</keyword>
<keyword id="KW-0813">Transport</keyword>
<sequence length="433" mass="44964">MESLNALLQGMGLMHLGAGQAIMLLVSLLLLWLAIAKKFEPLLLLPIGFGGLLSNIPEAGMALTALESLLAHHDAGQLAVIAAKLNCAPDVHAIKEALALALPSVQNQMENLAVDMGYTPGVLALFYKVAIGSGVAPLVIFMGVGAMTDFGPLLANPRTLLLGAAAQFGIFATVLGALTLNYFGLIAFTLPQAAAIGIIGGADGPTAIYLSGKLAPELLGAIAVAAYSYMALVPLIQPPIMRALTSEKERKIRMVQLRTVSKREKILFPVVLLLLVALLLPDAAPLLGMFCFGNLMRESGVVERLSDTVQNGLINIVTIFLGLSVGAKLVADKFLQPQTLGILLLGVIAFGIGTAAGVLMAKLLNLCSKNKINPLIGSAGVSAVPMAARVSNKVGLESNPQNFLLMHAMGPNVAGVIGSAIAAGVMLKYVLAM</sequence>
<gene>
    <name type="primary">oadB2</name>
    <name type="synonym">oadB</name>
    <name type="ordered locus">STY3531</name>
    <name type="ordered locus">t3266</name>
</gene>
<proteinExistence type="inferred from homology"/>
<name>OADB2_SALTI</name>
<reference key="1">
    <citation type="journal article" date="2001" name="Nature">
        <title>Complete genome sequence of a multiple drug resistant Salmonella enterica serovar Typhi CT18.</title>
        <authorList>
            <person name="Parkhill J."/>
            <person name="Dougan G."/>
            <person name="James K.D."/>
            <person name="Thomson N.R."/>
            <person name="Pickard D."/>
            <person name="Wain J."/>
            <person name="Churcher C.M."/>
            <person name="Mungall K.L."/>
            <person name="Bentley S.D."/>
            <person name="Holden M.T.G."/>
            <person name="Sebaihia M."/>
            <person name="Baker S."/>
            <person name="Basham D."/>
            <person name="Brooks K."/>
            <person name="Chillingworth T."/>
            <person name="Connerton P."/>
            <person name="Cronin A."/>
            <person name="Davis P."/>
            <person name="Davies R.M."/>
            <person name="Dowd L."/>
            <person name="White N."/>
            <person name="Farrar J."/>
            <person name="Feltwell T."/>
            <person name="Hamlin N."/>
            <person name="Haque A."/>
            <person name="Hien T.T."/>
            <person name="Holroyd S."/>
            <person name="Jagels K."/>
            <person name="Krogh A."/>
            <person name="Larsen T.S."/>
            <person name="Leather S."/>
            <person name="Moule S."/>
            <person name="O'Gaora P."/>
            <person name="Parry C."/>
            <person name="Quail M.A."/>
            <person name="Rutherford K.M."/>
            <person name="Simmonds M."/>
            <person name="Skelton J."/>
            <person name="Stevens K."/>
            <person name="Whitehead S."/>
            <person name="Barrell B.G."/>
        </authorList>
    </citation>
    <scope>NUCLEOTIDE SEQUENCE [LARGE SCALE GENOMIC DNA]</scope>
    <source>
        <strain>CT18</strain>
    </source>
</reference>
<reference key="2">
    <citation type="journal article" date="2003" name="J. Bacteriol.">
        <title>Comparative genomics of Salmonella enterica serovar Typhi strains Ty2 and CT18.</title>
        <authorList>
            <person name="Deng W."/>
            <person name="Liou S.-R."/>
            <person name="Plunkett G. III"/>
            <person name="Mayhew G.F."/>
            <person name="Rose D.J."/>
            <person name="Burland V."/>
            <person name="Kodoyianni V."/>
            <person name="Schwartz D.C."/>
            <person name="Blattner F.R."/>
        </authorList>
    </citation>
    <scope>NUCLEOTIDE SEQUENCE [LARGE SCALE GENOMIC DNA]</scope>
    <source>
        <strain>ATCC 700931 / Ty2</strain>
    </source>
</reference>
<evidence type="ECO:0000255" key="1"/>
<evidence type="ECO:0000305" key="2"/>